<organism>
    <name type="scientific">Mycobacterium tuberculosis (strain ATCC 25618 / H37Rv)</name>
    <dbReference type="NCBI Taxonomy" id="83332"/>
    <lineage>
        <taxon>Bacteria</taxon>
        <taxon>Bacillati</taxon>
        <taxon>Actinomycetota</taxon>
        <taxon>Actinomycetes</taxon>
        <taxon>Mycobacteriales</taxon>
        <taxon>Mycobacteriaceae</taxon>
        <taxon>Mycobacterium</taxon>
        <taxon>Mycobacterium tuberculosis complex</taxon>
    </lineage>
</organism>
<reference key="1">
    <citation type="journal article" date="1998" name="Nature">
        <title>Deciphering the biology of Mycobacterium tuberculosis from the complete genome sequence.</title>
        <authorList>
            <person name="Cole S.T."/>
            <person name="Brosch R."/>
            <person name="Parkhill J."/>
            <person name="Garnier T."/>
            <person name="Churcher C.M."/>
            <person name="Harris D.E."/>
            <person name="Gordon S.V."/>
            <person name="Eiglmeier K."/>
            <person name="Gas S."/>
            <person name="Barry C.E. III"/>
            <person name="Tekaia F."/>
            <person name="Badcock K."/>
            <person name="Basham D."/>
            <person name="Brown D."/>
            <person name="Chillingworth T."/>
            <person name="Connor R."/>
            <person name="Davies R.M."/>
            <person name="Devlin K."/>
            <person name="Feltwell T."/>
            <person name="Gentles S."/>
            <person name="Hamlin N."/>
            <person name="Holroyd S."/>
            <person name="Hornsby T."/>
            <person name="Jagels K."/>
            <person name="Krogh A."/>
            <person name="McLean J."/>
            <person name="Moule S."/>
            <person name="Murphy L.D."/>
            <person name="Oliver S."/>
            <person name="Osborne J."/>
            <person name="Quail M.A."/>
            <person name="Rajandream M.A."/>
            <person name="Rogers J."/>
            <person name="Rutter S."/>
            <person name="Seeger K."/>
            <person name="Skelton S."/>
            <person name="Squares S."/>
            <person name="Squares R."/>
            <person name="Sulston J.E."/>
            <person name="Taylor K."/>
            <person name="Whitehead S."/>
            <person name="Barrell B.G."/>
        </authorList>
    </citation>
    <scope>NUCLEOTIDE SEQUENCE [LARGE SCALE GENOMIC DNA]</scope>
    <source>
        <strain>ATCC 25618 / H37Rv</strain>
    </source>
</reference>
<protein>
    <recommendedName>
        <fullName>Uncharacterized protein Rv3424c</fullName>
    </recommendedName>
</protein>
<dbReference type="EMBL" id="AL123456">
    <property type="protein sequence ID" value="CCP46246.1"/>
    <property type="molecule type" value="Genomic_DNA"/>
</dbReference>
<dbReference type="PIR" id="E70738">
    <property type="entry name" value="E70738"/>
</dbReference>
<dbReference type="RefSeq" id="NP_217941.1">
    <property type="nucleotide sequence ID" value="NC_000962.3"/>
</dbReference>
<dbReference type="RefSeq" id="WP_003904310.1">
    <property type="nucleotide sequence ID" value="NZ_NVQJ01000027.1"/>
</dbReference>
<dbReference type="STRING" id="83332.Rv3424c"/>
<dbReference type="PaxDb" id="83332-Rv3424c"/>
<dbReference type="GeneID" id="887618"/>
<dbReference type="KEGG" id="mtu:Rv3424c"/>
<dbReference type="KEGG" id="mtv:RVBD_3424c"/>
<dbReference type="TubercuList" id="Rv3424c"/>
<dbReference type="InParanoid" id="P9WKY3"/>
<dbReference type="Proteomes" id="UP000001584">
    <property type="component" value="Chromosome"/>
</dbReference>
<sequence>MPNPVTMLYGRKADLVILPHVLAEERPHPYSTPGRKRGAQIALTTGIDALASFAPQIVNPRHGLSRVVQCLGGCENKRHAYFRSISKTPHIRARGVPSVCAVRTVGVDGAKRPPKPIPVQ</sequence>
<feature type="chain" id="PRO_0000104135" description="Uncharacterized protein Rv3424c">
    <location>
        <begin position="1"/>
        <end position="120"/>
    </location>
</feature>
<proteinExistence type="predicted"/>
<accession>P9WKY3</accession>
<accession>L0TFC3</accession>
<accession>P65085</accession>
<accession>Q50704</accession>
<name>Y3424_MYCTU</name>
<keyword id="KW-1185">Reference proteome</keyword>
<gene>
    <name type="ordered locus">Rv3424c</name>
    <name type="ORF">MTCY78.05</name>
</gene>